<sequence length="125" mass="14163">MSRFRGCSSSGVRFCSAEREASGSGRGNVLQFVQEPQAQQSRPFPAGAQLSLELLFSDWGMEWAQPRLPKPALPLPVVVAFSRAADCAVDHHFRFCLLLRLLRQLLTLLRDEEREVNPWQRKIVV</sequence>
<organism>
    <name type="scientific">Homo sapiens</name>
    <name type="common">Human</name>
    <dbReference type="NCBI Taxonomy" id="9606"/>
    <lineage>
        <taxon>Eukaryota</taxon>
        <taxon>Metazoa</taxon>
        <taxon>Chordata</taxon>
        <taxon>Craniata</taxon>
        <taxon>Vertebrata</taxon>
        <taxon>Euteleostomi</taxon>
        <taxon>Mammalia</taxon>
        <taxon>Eutheria</taxon>
        <taxon>Euarchontoglires</taxon>
        <taxon>Primates</taxon>
        <taxon>Haplorrhini</taxon>
        <taxon>Catarrhini</taxon>
        <taxon>Hominidae</taxon>
        <taxon>Homo</taxon>
    </lineage>
</organism>
<proteinExistence type="uncertain"/>
<feature type="chain" id="PRO_0000079737" description="Putative uncharacterized protein CXorf42">
    <location>
        <begin position="1"/>
        <end position="125"/>
    </location>
</feature>
<accession>Q8N9T2</accession>
<accession>Q05CP2</accession>
<accession>Q14CJ5</accession>
<accession>Q7Z3P3</accession>
<name>CX042_HUMAN</name>
<reference key="1">
    <citation type="journal article" date="2004" name="Nat. Genet.">
        <title>Complete sequencing and characterization of 21,243 full-length human cDNAs.</title>
        <authorList>
            <person name="Ota T."/>
            <person name="Suzuki Y."/>
            <person name="Nishikawa T."/>
            <person name="Otsuki T."/>
            <person name="Sugiyama T."/>
            <person name="Irie R."/>
            <person name="Wakamatsu A."/>
            <person name="Hayashi K."/>
            <person name="Sato H."/>
            <person name="Nagai K."/>
            <person name="Kimura K."/>
            <person name="Makita H."/>
            <person name="Sekine M."/>
            <person name="Obayashi M."/>
            <person name="Nishi T."/>
            <person name="Shibahara T."/>
            <person name="Tanaka T."/>
            <person name="Ishii S."/>
            <person name="Yamamoto J."/>
            <person name="Saito K."/>
            <person name="Kawai Y."/>
            <person name="Isono Y."/>
            <person name="Nakamura Y."/>
            <person name="Nagahari K."/>
            <person name="Murakami K."/>
            <person name="Yasuda T."/>
            <person name="Iwayanagi T."/>
            <person name="Wagatsuma M."/>
            <person name="Shiratori A."/>
            <person name="Sudo H."/>
            <person name="Hosoiri T."/>
            <person name="Kaku Y."/>
            <person name="Kodaira H."/>
            <person name="Kondo H."/>
            <person name="Sugawara M."/>
            <person name="Takahashi M."/>
            <person name="Kanda K."/>
            <person name="Yokoi T."/>
            <person name="Furuya T."/>
            <person name="Kikkawa E."/>
            <person name="Omura Y."/>
            <person name="Abe K."/>
            <person name="Kamihara K."/>
            <person name="Katsuta N."/>
            <person name="Sato K."/>
            <person name="Tanikawa M."/>
            <person name="Yamazaki M."/>
            <person name="Ninomiya K."/>
            <person name="Ishibashi T."/>
            <person name="Yamashita H."/>
            <person name="Murakawa K."/>
            <person name="Fujimori K."/>
            <person name="Tanai H."/>
            <person name="Kimata M."/>
            <person name="Watanabe M."/>
            <person name="Hiraoka S."/>
            <person name="Chiba Y."/>
            <person name="Ishida S."/>
            <person name="Ono Y."/>
            <person name="Takiguchi S."/>
            <person name="Watanabe S."/>
            <person name="Yosida M."/>
            <person name="Hotuta T."/>
            <person name="Kusano J."/>
            <person name="Kanehori K."/>
            <person name="Takahashi-Fujii A."/>
            <person name="Hara H."/>
            <person name="Tanase T.-O."/>
            <person name="Nomura Y."/>
            <person name="Togiya S."/>
            <person name="Komai F."/>
            <person name="Hara R."/>
            <person name="Takeuchi K."/>
            <person name="Arita M."/>
            <person name="Imose N."/>
            <person name="Musashino K."/>
            <person name="Yuuki H."/>
            <person name="Oshima A."/>
            <person name="Sasaki N."/>
            <person name="Aotsuka S."/>
            <person name="Yoshikawa Y."/>
            <person name="Matsunawa H."/>
            <person name="Ichihara T."/>
            <person name="Shiohata N."/>
            <person name="Sano S."/>
            <person name="Moriya S."/>
            <person name="Momiyama H."/>
            <person name="Satoh N."/>
            <person name="Takami S."/>
            <person name="Terashima Y."/>
            <person name="Suzuki O."/>
            <person name="Nakagawa S."/>
            <person name="Senoh A."/>
            <person name="Mizoguchi H."/>
            <person name="Goto Y."/>
            <person name="Shimizu F."/>
            <person name="Wakebe H."/>
            <person name="Hishigaki H."/>
            <person name="Watanabe T."/>
            <person name="Sugiyama A."/>
            <person name="Takemoto M."/>
            <person name="Kawakami B."/>
            <person name="Yamazaki M."/>
            <person name="Watanabe K."/>
            <person name="Kumagai A."/>
            <person name="Itakura S."/>
            <person name="Fukuzumi Y."/>
            <person name="Fujimori Y."/>
            <person name="Komiyama M."/>
            <person name="Tashiro H."/>
            <person name="Tanigami A."/>
            <person name="Fujiwara T."/>
            <person name="Ono T."/>
            <person name="Yamada K."/>
            <person name="Fujii Y."/>
            <person name="Ozaki K."/>
            <person name="Hirao M."/>
            <person name="Ohmori Y."/>
            <person name="Kawabata A."/>
            <person name="Hikiji T."/>
            <person name="Kobatake N."/>
            <person name="Inagaki H."/>
            <person name="Ikema Y."/>
            <person name="Okamoto S."/>
            <person name="Okitani R."/>
            <person name="Kawakami T."/>
            <person name="Noguchi S."/>
            <person name="Itoh T."/>
            <person name="Shigeta K."/>
            <person name="Senba T."/>
            <person name="Matsumura K."/>
            <person name="Nakajima Y."/>
            <person name="Mizuno T."/>
            <person name="Morinaga M."/>
            <person name="Sasaki M."/>
            <person name="Togashi T."/>
            <person name="Oyama M."/>
            <person name="Hata H."/>
            <person name="Watanabe M."/>
            <person name="Komatsu T."/>
            <person name="Mizushima-Sugano J."/>
            <person name="Satoh T."/>
            <person name="Shirai Y."/>
            <person name="Takahashi Y."/>
            <person name="Nakagawa K."/>
            <person name="Okumura K."/>
            <person name="Nagase T."/>
            <person name="Nomura N."/>
            <person name="Kikuchi H."/>
            <person name="Masuho Y."/>
            <person name="Yamashita R."/>
            <person name="Nakai K."/>
            <person name="Yada T."/>
            <person name="Nakamura Y."/>
            <person name="Ohara O."/>
            <person name="Isogai T."/>
            <person name="Sugano S."/>
        </authorList>
    </citation>
    <scope>NUCLEOTIDE SEQUENCE [LARGE SCALE MRNA]</scope>
    <source>
        <tissue>Trachea</tissue>
    </source>
</reference>
<reference key="2">
    <citation type="journal article" date="2005" name="Nature">
        <title>The DNA sequence of the human X chromosome.</title>
        <authorList>
            <person name="Ross M.T."/>
            <person name="Grafham D.V."/>
            <person name="Coffey A.J."/>
            <person name="Scherer S."/>
            <person name="McLay K."/>
            <person name="Muzny D."/>
            <person name="Platzer M."/>
            <person name="Howell G.R."/>
            <person name="Burrows C."/>
            <person name="Bird C.P."/>
            <person name="Frankish A."/>
            <person name="Lovell F.L."/>
            <person name="Howe K.L."/>
            <person name="Ashurst J.L."/>
            <person name="Fulton R.S."/>
            <person name="Sudbrak R."/>
            <person name="Wen G."/>
            <person name="Jones M.C."/>
            <person name="Hurles M.E."/>
            <person name="Andrews T.D."/>
            <person name="Scott C.E."/>
            <person name="Searle S."/>
            <person name="Ramser J."/>
            <person name="Whittaker A."/>
            <person name="Deadman R."/>
            <person name="Carter N.P."/>
            <person name="Hunt S.E."/>
            <person name="Chen R."/>
            <person name="Cree A."/>
            <person name="Gunaratne P."/>
            <person name="Havlak P."/>
            <person name="Hodgson A."/>
            <person name="Metzker M.L."/>
            <person name="Richards S."/>
            <person name="Scott G."/>
            <person name="Steffen D."/>
            <person name="Sodergren E."/>
            <person name="Wheeler D.A."/>
            <person name="Worley K.C."/>
            <person name="Ainscough R."/>
            <person name="Ambrose K.D."/>
            <person name="Ansari-Lari M.A."/>
            <person name="Aradhya S."/>
            <person name="Ashwell R.I."/>
            <person name="Babbage A.K."/>
            <person name="Bagguley C.L."/>
            <person name="Ballabio A."/>
            <person name="Banerjee R."/>
            <person name="Barker G.E."/>
            <person name="Barlow K.F."/>
            <person name="Barrett I.P."/>
            <person name="Bates K.N."/>
            <person name="Beare D.M."/>
            <person name="Beasley H."/>
            <person name="Beasley O."/>
            <person name="Beck A."/>
            <person name="Bethel G."/>
            <person name="Blechschmidt K."/>
            <person name="Brady N."/>
            <person name="Bray-Allen S."/>
            <person name="Bridgeman A.M."/>
            <person name="Brown A.J."/>
            <person name="Brown M.J."/>
            <person name="Bonnin D."/>
            <person name="Bruford E.A."/>
            <person name="Buhay C."/>
            <person name="Burch P."/>
            <person name="Burford D."/>
            <person name="Burgess J."/>
            <person name="Burrill W."/>
            <person name="Burton J."/>
            <person name="Bye J.M."/>
            <person name="Carder C."/>
            <person name="Carrel L."/>
            <person name="Chako J."/>
            <person name="Chapman J.C."/>
            <person name="Chavez D."/>
            <person name="Chen E."/>
            <person name="Chen G."/>
            <person name="Chen Y."/>
            <person name="Chen Z."/>
            <person name="Chinault C."/>
            <person name="Ciccodicola A."/>
            <person name="Clark S.Y."/>
            <person name="Clarke G."/>
            <person name="Clee C.M."/>
            <person name="Clegg S."/>
            <person name="Clerc-Blankenburg K."/>
            <person name="Clifford K."/>
            <person name="Cobley V."/>
            <person name="Cole C.G."/>
            <person name="Conquer J.S."/>
            <person name="Corby N."/>
            <person name="Connor R.E."/>
            <person name="David R."/>
            <person name="Davies J."/>
            <person name="Davis C."/>
            <person name="Davis J."/>
            <person name="Delgado O."/>
            <person name="Deshazo D."/>
            <person name="Dhami P."/>
            <person name="Ding Y."/>
            <person name="Dinh H."/>
            <person name="Dodsworth S."/>
            <person name="Draper H."/>
            <person name="Dugan-Rocha S."/>
            <person name="Dunham A."/>
            <person name="Dunn M."/>
            <person name="Durbin K.J."/>
            <person name="Dutta I."/>
            <person name="Eades T."/>
            <person name="Ellwood M."/>
            <person name="Emery-Cohen A."/>
            <person name="Errington H."/>
            <person name="Evans K.L."/>
            <person name="Faulkner L."/>
            <person name="Francis F."/>
            <person name="Frankland J."/>
            <person name="Fraser A.E."/>
            <person name="Galgoczy P."/>
            <person name="Gilbert J."/>
            <person name="Gill R."/>
            <person name="Gloeckner G."/>
            <person name="Gregory S.G."/>
            <person name="Gribble S."/>
            <person name="Griffiths C."/>
            <person name="Grocock R."/>
            <person name="Gu Y."/>
            <person name="Gwilliam R."/>
            <person name="Hamilton C."/>
            <person name="Hart E.A."/>
            <person name="Hawes A."/>
            <person name="Heath P.D."/>
            <person name="Heitmann K."/>
            <person name="Hennig S."/>
            <person name="Hernandez J."/>
            <person name="Hinzmann B."/>
            <person name="Ho S."/>
            <person name="Hoffs M."/>
            <person name="Howden P.J."/>
            <person name="Huckle E.J."/>
            <person name="Hume J."/>
            <person name="Hunt P.J."/>
            <person name="Hunt A.R."/>
            <person name="Isherwood J."/>
            <person name="Jacob L."/>
            <person name="Johnson D."/>
            <person name="Jones S."/>
            <person name="de Jong P.J."/>
            <person name="Joseph S.S."/>
            <person name="Keenan S."/>
            <person name="Kelly S."/>
            <person name="Kershaw J.K."/>
            <person name="Khan Z."/>
            <person name="Kioschis P."/>
            <person name="Klages S."/>
            <person name="Knights A.J."/>
            <person name="Kosiura A."/>
            <person name="Kovar-Smith C."/>
            <person name="Laird G.K."/>
            <person name="Langford C."/>
            <person name="Lawlor S."/>
            <person name="Leversha M."/>
            <person name="Lewis L."/>
            <person name="Liu W."/>
            <person name="Lloyd C."/>
            <person name="Lloyd D.M."/>
            <person name="Loulseged H."/>
            <person name="Loveland J.E."/>
            <person name="Lovell J.D."/>
            <person name="Lozado R."/>
            <person name="Lu J."/>
            <person name="Lyne R."/>
            <person name="Ma J."/>
            <person name="Maheshwari M."/>
            <person name="Matthews L.H."/>
            <person name="McDowall J."/>
            <person name="McLaren S."/>
            <person name="McMurray A."/>
            <person name="Meidl P."/>
            <person name="Meitinger T."/>
            <person name="Milne S."/>
            <person name="Miner G."/>
            <person name="Mistry S.L."/>
            <person name="Morgan M."/>
            <person name="Morris S."/>
            <person name="Mueller I."/>
            <person name="Mullikin J.C."/>
            <person name="Nguyen N."/>
            <person name="Nordsiek G."/>
            <person name="Nyakatura G."/>
            <person name="O'dell C.N."/>
            <person name="Okwuonu G."/>
            <person name="Palmer S."/>
            <person name="Pandian R."/>
            <person name="Parker D."/>
            <person name="Parrish J."/>
            <person name="Pasternak S."/>
            <person name="Patel D."/>
            <person name="Pearce A.V."/>
            <person name="Pearson D.M."/>
            <person name="Pelan S.E."/>
            <person name="Perez L."/>
            <person name="Porter K.M."/>
            <person name="Ramsey Y."/>
            <person name="Reichwald K."/>
            <person name="Rhodes S."/>
            <person name="Ridler K.A."/>
            <person name="Schlessinger D."/>
            <person name="Schueler M.G."/>
            <person name="Sehra H.K."/>
            <person name="Shaw-Smith C."/>
            <person name="Shen H."/>
            <person name="Sheridan E.M."/>
            <person name="Shownkeen R."/>
            <person name="Skuce C.D."/>
            <person name="Smith M.L."/>
            <person name="Sotheran E.C."/>
            <person name="Steingruber H.E."/>
            <person name="Steward C.A."/>
            <person name="Storey R."/>
            <person name="Swann R.M."/>
            <person name="Swarbreck D."/>
            <person name="Tabor P.E."/>
            <person name="Taudien S."/>
            <person name="Taylor T."/>
            <person name="Teague B."/>
            <person name="Thomas K."/>
            <person name="Thorpe A."/>
            <person name="Timms K."/>
            <person name="Tracey A."/>
            <person name="Trevanion S."/>
            <person name="Tromans A.C."/>
            <person name="d'Urso M."/>
            <person name="Verduzco D."/>
            <person name="Villasana D."/>
            <person name="Waldron L."/>
            <person name="Wall M."/>
            <person name="Wang Q."/>
            <person name="Warren J."/>
            <person name="Warry G.L."/>
            <person name="Wei X."/>
            <person name="West A."/>
            <person name="Whitehead S.L."/>
            <person name="Whiteley M.N."/>
            <person name="Wilkinson J.E."/>
            <person name="Willey D.L."/>
            <person name="Williams G."/>
            <person name="Williams L."/>
            <person name="Williamson A."/>
            <person name="Williamson H."/>
            <person name="Wilming L."/>
            <person name="Woodmansey R.L."/>
            <person name="Wray P.W."/>
            <person name="Yen J."/>
            <person name="Zhang J."/>
            <person name="Zhou J."/>
            <person name="Zoghbi H."/>
            <person name="Zorilla S."/>
            <person name="Buck D."/>
            <person name="Reinhardt R."/>
            <person name="Poustka A."/>
            <person name="Rosenthal A."/>
            <person name="Lehrach H."/>
            <person name="Meindl A."/>
            <person name="Minx P.J."/>
            <person name="Hillier L.W."/>
            <person name="Willard H.F."/>
            <person name="Wilson R.K."/>
            <person name="Waterston R.H."/>
            <person name="Rice C.M."/>
            <person name="Vaudin M."/>
            <person name="Coulson A."/>
            <person name="Nelson D.L."/>
            <person name="Weinstock G."/>
            <person name="Sulston J.E."/>
            <person name="Durbin R.M."/>
            <person name="Hubbard T."/>
            <person name="Gibbs R.A."/>
            <person name="Beck S."/>
            <person name="Rogers J."/>
            <person name="Bentley D.R."/>
        </authorList>
    </citation>
    <scope>NUCLEOTIDE SEQUENCE [LARGE SCALE GENOMIC DNA]</scope>
</reference>
<reference key="3">
    <citation type="journal article" date="2004" name="Genome Res.">
        <title>The status, quality, and expansion of the NIH full-length cDNA project: the Mammalian Gene Collection (MGC).</title>
        <authorList>
            <consortium name="The MGC Project Team"/>
        </authorList>
    </citation>
    <scope>NUCLEOTIDE SEQUENCE [LARGE SCALE MRNA]</scope>
    <source>
        <tissue>Lung</tissue>
    </source>
</reference>
<reference key="4">
    <citation type="journal article" date="2007" name="BMC Genomics">
        <title>The full-ORF clone resource of the German cDNA consortium.</title>
        <authorList>
            <person name="Bechtel S."/>
            <person name="Rosenfelder H."/>
            <person name="Duda A."/>
            <person name="Schmidt C.P."/>
            <person name="Ernst U."/>
            <person name="Wellenreuther R."/>
            <person name="Mehrle A."/>
            <person name="Schuster C."/>
            <person name="Bahr A."/>
            <person name="Bloecker H."/>
            <person name="Heubner D."/>
            <person name="Hoerlein A."/>
            <person name="Michel G."/>
            <person name="Wedler H."/>
            <person name="Koehrer K."/>
            <person name="Ottenwaelder B."/>
            <person name="Poustka A."/>
            <person name="Wiemann S."/>
            <person name="Schupp I."/>
        </authorList>
    </citation>
    <scope>NUCLEOTIDE SEQUENCE [LARGE SCALE MRNA] OF 1-121</scope>
    <source>
        <tissue>Retina</tissue>
    </source>
</reference>
<protein>
    <recommendedName>
        <fullName>Putative uncharacterized protein CXorf42</fullName>
    </recommendedName>
    <alternativeName>
        <fullName>NF-kappa-B-activating protein pseudogene 1</fullName>
    </alternativeName>
</protein>
<comment type="caution">
    <text evidence="1">Could be the product of a pseudogene. Related to NKAP.</text>
</comment>
<comment type="sequence caution" evidence="1">
    <conflict type="miscellaneous discrepancy">
        <sequence resource="EMBL-CDS" id="CAD97792"/>
    </conflict>
    <text>Cloning artifact.</text>
</comment>
<evidence type="ECO:0000305" key="1"/>
<dbReference type="EMBL" id="AK093895">
    <property type="protein sequence ID" value="BAC04246.1"/>
    <property type="molecule type" value="mRNA"/>
</dbReference>
<dbReference type="EMBL" id="AC002086">
    <property type="status" value="NOT_ANNOTATED_CDS"/>
    <property type="molecule type" value="Genomic_DNA"/>
</dbReference>
<dbReference type="EMBL" id="BC022359">
    <property type="status" value="NOT_ANNOTATED_CDS"/>
    <property type="molecule type" value="mRNA"/>
</dbReference>
<dbReference type="EMBL" id="BX537594">
    <property type="protein sequence ID" value="CAD97792.1"/>
    <property type="status" value="ALT_SEQ"/>
    <property type="molecule type" value="mRNA"/>
</dbReference>
<dbReference type="BioMuta" id="HGNC:26706"/>
<dbReference type="ProteomicsDB" id="72581"/>
<dbReference type="AGR" id="HGNC:26706"/>
<dbReference type="GeneCards" id="NKAPP1"/>
<dbReference type="HGNC" id="HGNC:26706">
    <property type="gene designation" value="NKAPP1"/>
</dbReference>
<dbReference type="neXtProt" id="NX_Q8N9T2"/>
<dbReference type="InParanoid" id="Q8N9T2"/>
<dbReference type="PAN-GO" id="Q8N9T2">
    <property type="GO annotations" value="0 GO annotations based on evolutionary models"/>
</dbReference>
<dbReference type="PathwayCommons" id="Q8N9T2"/>
<dbReference type="ChiTaRS" id="NKAPP1">
    <property type="organism name" value="human"/>
</dbReference>
<dbReference type="Pharos" id="Q8N9T2">
    <property type="development level" value="Tdark"/>
</dbReference>
<dbReference type="Proteomes" id="UP000005640">
    <property type="component" value="Unplaced"/>
</dbReference>
<dbReference type="RNAct" id="Q8N9T2">
    <property type="molecule type" value="protein"/>
</dbReference>
<gene>
    <name type="primary">NKAPP1</name>
    <name type="synonym">CXorf42</name>
</gene>
<keyword id="KW-1185">Reference proteome</keyword>